<evidence type="ECO:0000255" key="1">
    <source>
        <dbReference type="HAMAP-Rule" id="MF_01395"/>
    </source>
</evidence>
<evidence type="ECO:0000255" key="2">
    <source>
        <dbReference type="PROSITE-ProRule" id="PRU01136"/>
    </source>
</evidence>
<name>ACCD_CHLL3</name>
<comment type="function">
    <text evidence="1">Component of the acetyl coenzyme A carboxylase (ACC) complex. Biotin carboxylase (BC) catalyzes the carboxylation of biotin on its carrier protein (BCCP) and then the CO(2) group is transferred by the transcarboxylase to acetyl-CoA to form malonyl-CoA.</text>
</comment>
<comment type="catalytic activity">
    <reaction evidence="1">
        <text>N(6)-carboxybiotinyl-L-lysyl-[protein] + acetyl-CoA = N(6)-biotinyl-L-lysyl-[protein] + malonyl-CoA</text>
        <dbReference type="Rhea" id="RHEA:54728"/>
        <dbReference type="Rhea" id="RHEA-COMP:10505"/>
        <dbReference type="Rhea" id="RHEA-COMP:10506"/>
        <dbReference type="ChEBI" id="CHEBI:57288"/>
        <dbReference type="ChEBI" id="CHEBI:57384"/>
        <dbReference type="ChEBI" id="CHEBI:83144"/>
        <dbReference type="ChEBI" id="CHEBI:83145"/>
        <dbReference type="EC" id="2.1.3.15"/>
    </reaction>
</comment>
<comment type="cofactor">
    <cofactor evidence="1">
        <name>Zn(2+)</name>
        <dbReference type="ChEBI" id="CHEBI:29105"/>
    </cofactor>
    <text evidence="1">Binds 1 zinc ion per subunit.</text>
</comment>
<comment type="pathway">
    <text evidence="1">Lipid metabolism; malonyl-CoA biosynthesis; malonyl-CoA from acetyl-CoA: step 1/1.</text>
</comment>
<comment type="subunit">
    <text evidence="1">Acetyl-CoA carboxylase is a heterohexamer composed of biotin carboxyl carrier protein (AccB), biotin carboxylase (AccC) and two subunits each of ACCase subunit alpha (AccA) and ACCase subunit beta (AccD).</text>
</comment>
<comment type="subcellular location">
    <subcellularLocation>
        <location evidence="1">Cytoplasm</location>
    </subcellularLocation>
</comment>
<comment type="similarity">
    <text evidence="1">Belongs to the AccD/PCCB family.</text>
</comment>
<proteinExistence type="inferred from homology"/>
<reference key="1">
    <citation type="submission" date="2005-08" db="EMBL/GenBank/DDBJ databases">
        <title>Complete sequence of Pelodictyon luteolum DSM 273.</title>
        <authorList>
            <consortium name="US DOE Joint Genome Institute"/>
            <person name="Copeland A."/>
            <person name="Lucas S."/>
            <person name="Lapidus A."/>
            <person name="Barry K."/>
            <person name="Detter J.C."/>
            <person name="Glavina T."/>
            <person name="Hammon N."/>
            <person name="Israni S."/>
            <person name="Pitluck S."/>
            <person name="Bryant D."/>
            <person name="Schmutz J."/>
            <person name="Larimer F."/>
            <person name="Land M."/>
            <person name="Kyrpides N."/>
            <person name="Ivanova N."/>
            <person name="Richardson P."/>
        </authorList>
    </citation>
    <scope>NUCLEOTIDE SEQUENCE [LARGE SCALE GENOMIC DNA]</scope>
    <source>
        <strain>DSM 273 / BCRC 81028 / 2530</strain>
    </source>
</reference>
<keyword id="KW-0067">ATP-binding</keyword>
<keyword id="KW-0963">Cytoplasm</keyword>
<keyword id="KW-0275">Fatty acid biosynthesis</keyword>
<keyword id="KW-0276">Fatty acid metabolism</keyword>
<keyword id="KW-0444">Lipid biosynthesis</keyword>
<keyword id="KW-0443">Lipid metabolism</keyword>
<keyword id="KW-0479">Metal-binding</keyword>
<keyword id="KW-0547">Nucleotide-binding</keyword>
<keyword id="KW-1185">Reference proteome</keyword>
<keyword id="KW-0808">Transferase</keyword>
<keyword id="KW-0862">Zinc</keyword>
<keyword id="KW-0863">Zinc-finger</keyword>
<gene>
    <name evidence="1" type="primary">accD</name>
    <name type="ordered locus">Plut_0363</name>
</gene>
<dbReference type="EC" id="2.1.3.15" evidence="1"/>
<dbReference type="EMBL" id="CP000096">
    <property type="protein sequence ID" value="ABB23251.1"/>
    <property type="molecule type" value="Genomic_DNA"/>
</dbReference>
<dbReference type="RefSeq" id="WP_011357126.1">
    <property type="nucleotide sequence ID" value="NC_007512.1"/>
</dbReference>
<dbReference type="SMR" id="Q3B5Y0"/>
<dbReference type="STRING" id="319225.Plut_0363"/>
<dbReference type="KEGG" id="plt:Plut_0363"/>
<dbReference type="eggNOG" id="COG0777">
    <property type="taxonomic scope" value="Bacteria"/>
</dbReference>
<dbReference type="HOGENOM" id="CLU_015486_1_0_10"/>
<dbReference type="OrthoDB" id="9772975at2"/>
<dbReference type="UniPathway" id="UPA00655">
    <property type="reaction ID" value="UER00711"/>
</dbReference>
<dbReference type="Proteomes" id="UP000002709">
    <property type="component" value="Chromosome"/>
</dbReference>
<dbReference type="GO" id="GO:0009317">
    <property type="term" value="C:acetyl-CoA carboxylase complex"/>
    <property type="evidence" value="ECO:0007669"/>
    <property type="project" value="InterPro"/>
</dbReference>
<dbReference type="GO" id="GO:0003989">
    <property type="term" value="F:acetyl-CoA carboxylase activity"/>
    <property type="evidence" value="ECO:0007669"/>
    <property type="project" value="InterPro"/>
</dbReference>
<dbReference type="GO" id="GO:0005524">
    <property type="term" value="F:ATP binding"/>
    <property type="evidence" value="ECO:0007669"/>
    <property type="project" value="UniProtKB-KW"/>
</dbReference>
<dbReference type="GO" id="GO:0016743">
    <property type="term" value="F:carboxyl- or carbamoyltransferase activity"/>
    <property type="evidence" value="ECO:0007669"/>
    <property type="project" value="UniProtKB-UniRule"/>
</dbReference>
<dbReference type="GO" id="GO:0008270">
    <property type="term" value="F:zinc ion binding"/>
    <property type="evidence" value="ECO:0007669"/>
    <property type="project" value="UniProtKB-UniRule"/>
</dbReference>
<dbReference type="GO" id="GO:0006633">
    <property type="term" value="P:fatty acid biosynthetic process"/>
    <property type="evidence" value="ECO:0007669"/>
    <property type="project" value="UniProtKB-KW"/>
</dbReference>
<dbReference type="GO" id="GO:2001295">
    <property type="term" value="P:malonyl-CoA biosynthetic process"/>
    <property type="evidence" value="ECO:0007669"/>
    <property type="project" value="UniProtKB-UniRule"/>
</dbReference>
<dbReference type="Gene3D" id="3.90.226.10">
    <property type="entry name" value="2-enoyl-CoA Hydratase, Chain A, domain 1"/>
    <property type="match status" value="1"/>
</dbReference>
<dbReference type="HAMAP" id="MF_01395">
    <property type="entry name" value="AcetylCoA_CT_beta"/>
    <property type="match status" value="1"/>
</dbReference>
<dbReference type="InterPro" id="IPR034733">
    <property type="entry name" value="AcCoA_carboxyl_beta"/>
</dbReference>
<dbReference type="InterPro" id="IPR000438">
    <property type="entry name" value="Acetyl_CoA_COase_Trfase_b_su"/>
</dbReference>
<dbReference type="InterPro" id="IPR029045">
    <property type="entry name" value="ClpP/crotonase-like_dom_sf"/>
</dbReference>
<dbReference type="InterPro" id="IPR011762">
    <property type="entry name" value="COA_CT_N"/>
</dbReference>
<dbReference type="InterPro" id="IPR041010">
    <property type="entry name" value="Znf-ACC"/>
</dbReference>
<dbReference type="NCBIfam" id="TIGR00515">
    <property type="entry name" value="accD"/>
    <property type="match status" value="1"/>
</dbReference>
<dbReference type="PANTHER" id="PTHR42995">
    <property type="entry name" value="ACETYL-COENZYME A CARBOXYLASE CARBOXYL TRANSFERASE SUBUNIT BETA, CHLOROPLASTIC"/>
    <property type="match status" value="1"/>
</dbReference>
<dbReference type="PANTHER" id="PTHR42995:SF5">
    <property type="entry name" value="ACETYL-COENZYME A CARBOXYLASE CARBOXYL TRANSFERASE SUBUNIT BETA, CHLOROPLASTIC"/>
    <property type="match status" value="1"/>
</dbReference>
<dbReference type="Pfam" id="PF01039">
    <property type="entry name" value="Carboxyl_trans"/>
    <property type="match status" value="1"/>
</dbReference>
<dbReference type="Pfam" id="PF17848">
    <property type="entry name" value="Zn_ribbon_ACC"/>
    <property type="match status" value="1"/>
</dbReference>
<dbReference type="PRINTS" id="PR01070">
    <property type="entry name" value="ACCCTRFRASEB"/>
</dbReference>
<dbReference type="SUPFAM" id="SSF52096">
    <property type="entry name" value="ClpP/crotonase"/>
    <property type="match status" value="1"/>
</dbReference>
<dbReference type="PROSITE" id="PS50980">
    <property type="entry name" value="COA_CT_NTER"/>
    <property type="match status" value="1"/>
</dbReference>
<organism>
    <name type="scientific">Chlorobium luteolum (strain DSM 273 / BCRC 81028 / 2530)</name>
    <name type="common">Pelodictyon luteolum</name>
    <dbReference type="NCBI Taxonomy" id="319225"/>
    <lineage>
        <taxon>Bacteria</taxon>
        <taxon>Pseudomonadati</taxon>
        <taxon>Chlorobiota</taxon>
        <taxon>Chlorobiia</taxon>
        <taxon>Chlorobiales</taxon>
        <taxon>Chlorobiaceae</taxon>
        <taxon>Chlorobium/Pelodictyon group</taxon>
        <taxon>Pelodictyon</taxon>
    </lineage>
</organism>
<sequence>MVWFKRVKPFIRTTDRRDVPEGLWSKCEDCGAMLHRRQLEENLNTCNECGHHFRISPYRYFSILFDNEEFTEFDDCLRAADPLTFVDTKKYPDRVHDTIEKSGKTEACRNAFGKSAGADLVISAMDFGFIGGSMGSVVGEKISRAADKAIELNAPLIVISQSGGARMMEGAFSLMQMAKTAARLTRLGENRLPFISLMTDPTMGGISASFAMLGDLNISEPKALIGFAGPRVIRDTIKRDLPEGFQRAEFLQEHGFVDMIVHRKELKQRLAKTLAMMRVEG</sequence>
<accession>Q3B5Y0</accession>
<protein>
    <recommendedName>
        <fullName evidence="1">Acetyl-coenzyme A carboxylase carboxyl transferase subunit beta</fullName>
        <shortName evidence="1">ACCase subunit beta</shortName>
        <shortName evidence="1">Acetyl-CoA carboxylase carboxyltransferase subunit beta</shortName>
        <ecNumber evidence="1">2.1.3.15</ecNumber>
    </recommendedName>
</protein>
<feature type="chain" id="PRO_0000389815" description="Acetyl-coenzyme A carboxylase carboxyl transferase subunit beta">
    <location>
        <begin position="1"/>
        <end position="281"/>
    </location>
</feature>
<feature type="domain" description="CoA carboxyltransferase N-terminal" evidence="2">
    <location>
        <begin position="23"/>
        <end position="281"/>
    </location>
</feature>
<feature type="zinc finger region" description="C4-type" evidence="1">
    <location>
        <begin position="27"/>
        <end position="49"/>
    </location>
</feature>
<feature type="binding site" evidence="1">
    <location>
        <position position="27"/>
    </location>
    <ligand>
        <name>Zn(2+)</name>
        <dbReference type="ChEBI" id="CHEBI:29105"/>
    </ligand>
</feature>
<feature type="binding site" evidence="1">
    <location>
        <position position="30"/>
    </location>
    <ligand>
        <name>Zn(2+)</name>
        <dbReference type="ChEBI" id="CHEBI:29105"/>
    </ligand>
</feature>
<feature type="binding site" evidence="1">
    <location>
        <position position="46"/>
    </location>
    <ligand>
        <name>Zn(2+)</name>
        <dbReference type="ChEBI" id="CHEBI:29105"/>
    </ligand>
</feature>
<feature type="binding site" evidence="1">
    <location>
        <position position="49"/>
    </location>
    <ligand>
        <name>Zn(2+)</name>
        <dbReference type="ChEBI" id="CHEBI:29105"/>
    </ligand>
</feature>